<accession>Q5GTE5</accession>
<keyword id="KW-0067">ATP-binding</keyword>
<keyword id="KW-0143">Chaperone</keyword>
<keyword id="KW-0963">Cytoplasm</keyword>
<keyword id="KW-0547">Nucleotide-binding</keyword>
<keyword id="KW-1185">Reference proteome</keyword>
<keyword id="KW-0346">Stress response</keyword>
<dbReference type="EMBL" id="AE017321">
    <property type="protein sequence ID" value="AAW70729.1"/>
    <property type="molecule type" value="Genomic_DNA"/>
</dbReference>
<dbReference type="SMR" id="Q5GTE5"/>
<dbReference type="STRING" id="292805.Wbm0138"/>
<dbReference type="KEGG" id="wbm:Wbm0138"/>
<dbReference type="eggNOG" id="COG0326">
    <property type="taxonomic scope" value="Bacteria"/>
</dbReference>
<dbReference type="HOGENOM" id="CLU_006684_3_0_5"/>
<dbReference type="Proteomes" id="UP000000534">
    <property type="component" value="Chromosome"/>
</dbReference>
<dbReference type="GO" id="GO:0005737">
    <property type="term" value="C:cytoplasm"/>
    <property type="evidence" value="ECO:0007669"/>
    <property type="project" value="UniProtKB-SubCell"/>
</dbReference>
<dbReference type="GO" id="GO:0005524">
    <property type="term" value="F:ATP binding"/>
    <property type="evidence" value="ECO:0007669"/>
    <property type="project" value="UniProtKB-UniRule"/>
</dbReference>
<dbReference type="GO" id="GO:0016887">
    <property type="term" value="F:ATP hydrolysis activity"/>
    <property type="evidence" value="ECO:0007669"/>
    <property type="project" value="InterPro"/>
</dbReference>
<dbReference type="GO" id="GO:0140662">
    <property type="term" value="F:ATP-dependent protein folding chaperone"/>
    <property type="evidence" value="ECO:0007669"/>
    <property type="project" value="InterPro"/>
</dbReference>
<dbReference type="GO" id="GO:0051082">
    <property type="term" value="F:unfolded protein binding"/>
    <property type="evidence" value="ECO:0007669"/>
    <property type="project" value="UniProtKB-UniRule"/>
</dbReference>
<dbReference type="CDD" id="cd16927">
    <property type="entry name" value="HATPase_Hsp90-like"/>
    <property type="match status" value="1"/>
</dbReference>
<dbReference type="FunFam" id="3.30.565.10:FF:000009">
    <property type="entry name" value="Molecular chaperone HtpG"/>
    <property type="match status" value="1"/>
</dbReference>
<dbReference type="Gene3D" id="3.30.230.80">
    <property type="match status" value="1"/>
</dbReference>
<dbReference type="Gene3D" id="3.40.50.11260">
    <property type="match status" value="1"/>
</dbReference>
<dbReference type="Gene3D" id="1.20.120.790">
    <property type="entry name" value="Heat shock protein 90, C-terminal domain"/>
    <property type="match status" value="1"/>
</dbReference>
<dbReference type="Gene3D" id="3.30.565.10">
    <property type="entry name" value="Histidine kinase-like ATPase, C-terminal domain"/>
    <property type="match status" value="1"/>
</dbReference>
<dbReference type="HAMAP" id="MF_00505">
    <property type="entry name" value="HSP90"/>
    <property type="match status" value="1"/>
</dbReference>
<dbReference type="InterPro" id="IPR036890">
    <property type="entry name" value="HATPase_C_sf"/>
</dbReference>
<dbReference type="InterPro" id="IPR019805">
    <property type="entry name" value="Heat_shock_protein_90_CS"/>
</dbReference>
<dbReference type="InterPro" id="IPR037196">
    <property type="entry name" value="HSP90_C"/>
</dbReference>
<dbReference type="InterPro" id="IPR001404">
    <property type="entry name" value="Hsp90_fam"/>
</dbReference>
<dbReference type="InterPro" id="IPR020575">
    <property type="entry name" value="Hsp90_N"/>
</dbReference>
<dbReference type="InterPro" id="IPR020568">
    <property type="entry name" value="Ribosomal_Su5_D2-typ_SF"/>
</dbReference>
<dbReference type="NCBIfam" id="NF003555">
    <property type="entry name" value="PRK05218.1"/>
    <property type="match status" value="1"/>
</dbReference>
<dbReference type="PANTHER" id="PTHR11528">
    <property type="entry name" value="HEAT SHOCK PROTEIN 90 FAMILY MEMBER"/>
    <property type="match status" value="1"/>
</dbReference>
<dbReference type="Pfam" id="PF13589">
    <property type="entry name" value="HATPase_c_3"/>
    <property type="match status" value="1"/>
</dbReference>
<dbReference type="Pfam" id="PF00183">
    <property type="entry name" value="HSP90"/>
    <property type="match status" value="1"/>
</dbReference>
<dbReference type="PIRSF" id="PIRSF002583">
    <property type="entry name" value="Hsp90"/>
    <property type="match status" value="1"/>
</dbReference>
<dbReference type="PRINTS" id="PR00775">
    <property type="entry name" value="HEATSHOCK90"/>
</dbReference>
<dbReference type="SUPFAM" id="SSF55874">
    <property type="entry name" value="ATPase domain of HSP90 chaperone/DNA topoisomerase II/histidine kinase"/>
    <property type="match status" value="1"/>
</dbReference>
<dbReference type="SUPFAM" id="SSF110942">
    <property type="entry name" value="HSP90 C-terminal domain"/>
    <property type="match status" value="1"/>
</dbReference>
<dbReference type="SUPFAM" id="SSF54211">
    <property type="entry name" value="Ribosomal protein S5 domain 2-like"/>
    <property type="match status" value="1"/>
</dbReference>
<dbReference type="PROSITE" id="PS00298">
    <property type="entry name" value="HSP90"/>
    <property type="match status" value="1"/>
</dbReference>
<gene>
    <name evidence="1" type="primary">htpG</name>
    <name type="ordered locus">Wbm0138</name>
</gene>
<name>HTPG_WOLTR</name>
<reference key="1">
    <citation type="journal article" date="2005" name="PLoS Biol.">
        <title>The Wolbachia genome of Brugia malayi: endosymbiont evolution within a human pathogenic nematode.</title>
        <authorList>
            <person name="Foster J."/>
            <person name="Ganatra M."/>
            <person name="Kamal I."/>
            <person name="Ware J."/>
            <person name="Makarova K."/>
            <person name="Ivanova N."/>
            <person name="Bhattacharyya A."/>
            <person name="Kapatral V."/>
            <person name="Kumar S."/>
            <person name="Posfai J."/>
            <person name="Vincze T."/>
            <person name="Ingram J."/>
            <person name="Moran L."/>
            <person name="Lapidus A."/>
            <person name="Omelchenko M."/>
            <person name="Kyrpides N."/>
            <person name="Ghedin E."/>
            <person name="Wang S."/>
            <person name="Goltsman E."/>
            <person name="Joukov V."/>
            <person name="Ostrovskaya O."/>
            <person name="Tsukerman K."/>
            <person name="Mazur M."/>
            <person name="Comb D."/>
            <person name="Koonin E."/>
            <person name="Slatko B."/>
        </authorList>
    </citation>
    <scope>NUCLEOTIDE SEQUENCE [LARGE SCALE GENOMIC DNA]</scope>
    <source>
        <strain>TRS</strain>
    </source>
</reference>
<evidence type="ECO:0000255" key="1">
    <source>
        <dbReference type="HAMAP-Rule" id="MF_00505"/>
    </source>
</evidence>
<evidence type="ECO:0000256" key="2">
    <source>
        <dbReference type="SAM" id="MobiDB-lite"/>
    </source>
</evidence>
<feature type="chain" id="PRO_0000224236" description="Chaperone protein HtpG">
    <location>
        <begin position="1"/>
        <end position="637"/>
    </location>
</feature>
<feature type="region of interest" description="A; substrate-binding" evidence="1">
    <location>
        <begin position="1"/>
        <end position="338"/>
    </location>
</feature>
<feature type="region of interest" description="B" evidence="1">
    <location>
        <begin position="339"/>
        <end position="558"/>
    </location>
</feature>
<feature type="region of interest" description="Disordered" evidence="2">
    <location>
        <begin position="493"/>
        <end position="512"/>
    </location>
</feature>
<feature type="region of interest" description="C" evidence="1">
    <location>
        <begin position="559"/>
        <end position="637"/>
    </location>
</feature>
<protein>
    <recommendedName>
        <fullName evidence="1">Chaperone protein HtpG</fullName>
    </recommendedName>
    <alternativeName>
        <fullName evidence="1">Heat shock protein HtpG</fullName>
    </alternativeName>
    <alternativeName>
        <fullName evidence="1">High temperature protein G</fullName>
    </alternativeName>
</protein>
<sequence length="637" mass="72410">MMELKMHNVKGTENLKFDAEVGKVLNIVIHSLYTNKDIFLRELVSNASDACDKLRYESQLNPNLLDSSGELKITISSNKDENELYVTDNGIGMSRQDLIGNLGTIASSGTQKFLDAIKNSKDSSQAVELIGKFGVGFYSSFMVASEVIVESRKAGEEESWVWRSTGDGEYSISKLDNQIPCGTKITLVMRPEENEFLDKFRIENIVTTYSDHINFPVEFIDEEGKSEKLNSKAAIWTKLKNDVTQEEHNDFFRGVAHVGGEPWMILHNKNEGAIEYTNLLYVPSIKPFDLFHPDRRCSVKLYVNKVFITEDNVQIIPQYLRFLKGVVDSPDLPLNISRETLQNNRVVEQIRKSLTKRVISELGKKAKENLEEYTKFWTNFGAVLKEGLCEAMPTEEREALLSICRFHSTGDKKLVSIDDYISRMKPEQGYIYYLTGNSLDSVKNSPQLEGFISKGLEVLLFVDPVDDFWTSVIHEYKGQKFKSVTRADVDLEKFSPEEKDKENKSDEERAEGNTDSILQYFTKVLGNAVKSVKISKKLTDSPVCLAVDEGAMDLRMERFLREQNQLNYRTPKVLEVNTKHSVIKSIIKSYAENGENPTLEDMVHLLFYQACIVEGEEMDDASLFAKKLNNLLGKVII</sequence>
<organism>
    <name type="scientific">Wolbachia sp. subsp. Brugia malayi (strain TRS)</name>
    <dbReference type="NCBI Taxonomy" id="292805"/>
    <lineage>
        <taxon>Bacteria</taxon>
        <taxon>Pseudomonadati</taxon>
        <taxon>Pseudomonadota</taxon>
        <taxon>Alphaproteobacteria</taxon>
        <taxon>Rickettsiales</taxon>
        <taxon>Anaplasmataceae</taxon>
        <taxon>Wolbachieae</taxon>
        <taxon>Wolbachia</taxon>
    </lineage>
</organism>
<comment type="function">
    <text evidence="1">Molecular chaperone. Has ATPase activity.</text>
</comment>
<comment type="subunit">
    <text evidence="1">Homodimer.</text>
</comment>
<comment type="subcellular location">
    <subcellularLocation>
        <location evidence="1">Cytoplasm</location>
    </subcellularLocation>
</comment>
<comment type="similarity">
    <text evidence="1">Belongs to the heat shock protein 90 family.</text>
</comment>
<proteinExistence type="inferred from homology"/>